<organism>
    <name type="scientific">Xanthomonas campestris</name>
    <dbReference type="NCBI Taxonomy" id="339"/>
    <lineage>
        <taxon>Bacteria</taxon>
        <taxon>Pseudomonadati</taxon>
        <taxon>Pseudomonadota</taxon>
        <taxon>Gammaproteobacteria</taxon>
        <taxon>Lysobacterales</taxon>
        <taxon>Lysobacteraceae</taxon>
        <taxon>Xanthomonas</taxon>
    </lineage>
</organism>
<accession>Q93MQ9</accession>
<evidence type="ECO:0000255" key="1">
    <source>
        <dbReference type="HAMAP-Rule" id="MF_00015"/>
    </source>
</evidence>
<keyword id="KW-0068">Autocatalytic cleavage</keyword>
<keyword id="KW-0227">DNA damage</keyword>
<keyword id="KW-0234">DNA repair</keyword>
<keyword id="KW-0235">DNA replication</keyword>
<keyword id="KW-0238">DNA-binding</keyword>
<keyword id="KW-0378">Hydrolase</keyword>
<keyword id="KW-0678">Repressor</keyword>
<keyword id="KW-0742">SOS response</keyword>
<keyword id="KW-0804">Transcription</keyword>
<keyword id="KW-0805">Transcription regulation</keyword>
<proteinExistence type="inferred from homology"/>
<feature type="chain" id="PRO_0000170107" description="LexA repressor">
    <location>
        <begin position="1"/>
        <end position="213"/>
    </location>
</feature>
<feature type="DNA-binding region" description="H-T-H motif" evidence="1">
    <location>
        <begin position="27"/>
        <end position="47"/>
    </location>
</feature>
<feature type="active site" description="For autocatalytic cleavage activity" evidence="1">
    <location>
        <position position="133"/>
    </location>
</feature>
<feature type="active site" description="For autocatalytic cleavage activity" evidence="1">
    <location>
        <position position="170"/>
    </location>
</feature>
<feature type="site" description="Cleavage; by autolysis" evidence="1">
    <location>
        <begin position="98"/>
        <end position="99"/>
    </location>
</feature>
<name>LEXA_XANCA</name>
<comment type="function">
    <text evidence="1">Represses a number of genes involved in the response to DNA damage (SOS response), including recA and lexA. In the presence of single-stranded DNA, RecA interacts with LexA causing an autocatalytic cleavage which disrupts the DNA-binding part of LexA, leading to derepression of the SOS regulon and eventually DNA repair.</text>
</comment>
<comment type="catalytic activity">
    <reaction evidence="1">
        <text>Hydrolysis of Ala-|-Gly bond in repressor LexA.</text>
        <dbReference type="EC" id="3.4.21.88"/>
    </reaction>
</comment>
<comment type="subunit">
    <text evidence="1">Homodimer.</text>
</comment>
<comment type="similarity">
    <text evidence="1">Belongs to the peptidase S24 family.</text>
</comment>
<gene>
    <name evidence="1" type="primary">lexA</name>
</gene>
<protein>
    <recommendedName>
        <fullName evidence="1">LexA repressor</fullName>
        <ecNumber evidence="1">3.4.21.88</ecNumber>
    </recommendedName>
</protein>
<reference key="1">
    <citation type="submission" date="2001-07" db="EMBL/GenBank/DDBJ databases">
        <authorList>
            <person name="Yang M.-K."/>
            <person name="Yang Y.-C."/>
        </authorList>
    </citation>
    <scope>NUCLEOTIDE SEQUENCE [GENOMIC DNA]</scope>
</reference>
<dbReference type="EC" id="3.4.21.88" evidence="1"/>
<dbReference type="EMBL" id="AF399933">
    <property type="protein sequence ID" value="AAK85397.1"/>
    <property type="molecule type" value="Genomic_DNA"/>
</dbReference>
<dbReference type="RefSeq" id="WP_011269877.1">
    <property type="nucleotide sequence ID" value="NZ_QUZR01000005.1"/>
</dbReference>
<dbReference type="SMR" id="Q93MQ9"/>
<dbReference type="MEROPS" id="S24.001"/>
<dbReference type="GeneID" id="58013724"/>
<dbReference type="eggNOG" id="COG1974">
    <property type="taxonomic scope" value="Bacteria"/>
</dbReference>
<dbReference type="OMA" id="HVWLLPH"/>
<dbReference type="GO" id="GO:0003677">
    <property type="term" value="F:DNA binding"/>
    <property type="evidence" value="ECO:0007669"/>
    <property type="project" value="UniProtKB-UniRule"/>
</dbReference>
<dbReference type="GO" id="GO:0004252">
    <property type="term" value="F:serine-type endopeptidase activity"/>
    <property type="evidence" value="ECO:0007669"/>
    <property type="project" value="UniProtKB-UniRule"/>
</dbReference>
<dbReference type="GO" id="GO:0006281">
    <property type="term" value="P:DNA repair"/>
    <property type="evidence" value="ECO:0007669"/>
    <property type="project" value="UniProtKB-UniRule"/>
</dbReference>
<dbReference type="GO" id="GO:0006260">
    <property type="term" value="P:DNA replication"/>
    <property type="evidence" value="ECO:0007669"/>
    <property type="project" value="UniProtKB-UniRule"/>
</dbReference>
<dbReference type="GO" id="GO:0045892">
    <property type="term" value="P:negative regulation of DNA-templated transcription"/>
    <property type="evidence" value="ECO:0007669"/>
    <property type="project" value="UniProtKB-UniRule"/>
</dbReference>
<dbReference type="GO" id="GO:0006508">
    <property type="term" value="P:proteolysis"/>
    <property type="evidence" value="ECO:0007669"/>
    <property type="project" value="InterPro"/>
</dbReference>
<dbReference type="GO" id="GO:0009432">
    <property type="term" value="P:SOS response"/>
    <property type="evidence" value="ECO:0007669"/>
    <property type="project" value="UniProtKB-UniRule"/>
</dbReference>
<dbReference type="CDD" id="cd06529">
    <property type="entry name" value="S24_LexA-like"/>
    <property type="match status" value="1"/>
</dbReference>
<dbReference type="FunFam" id="1.10.10.10:FF:000009">
    <property type="entry name" value="LexA repressor"/>
    <property type="match status" value="1"/>
</dbReference>
<dbReference type="FunFam" id="2.10.109.10:FF:000001">
    <property type="entry name" value="LexA repressor"/>
    <property type="match status" value="1"/>
</dbReference>
<dbReference type="Gene3D" id="2.10.109.10">
    <property type="entry name" value="Umud Fragment, subunit A"/>
    <property type="match status" value="1"/>
</dbReference>
<dbReference type="Gene3D" id="1.10.10.10">
    <property type="entry name" value="Winged helix-like DNA-binding domain superfamily/Winged helix DNA-binding domain"/>
    <property type="match status" value="1"/>
</dbReference>
<dbReference type="HAMAP" id="MF_00015">
    <property type="entry name" value="LexA"/>
    <property type="match status" value="1"/>
</dbReference>
<dbReference type="InterPro" id="IPR006200">
    <property type="entry name" value="LexA"/>
</dbReference>
<dbReference type="InterPro" id="IPR039418">
    <property type="entry name" value="LexA-like"/>
</dbReference>
<dbReference type="InterPro" id="IPR036286">
    <property type="entry name" value="LexA/Signal_pep-like_sf"/>
</dbReference>
<dbReference type="InterPro" id="IPR006199">
    <property type="entry name" value="LexA_DNA-bd_dom"/>
</dbReference>
<dbReference type="InterPro" id="IPR050077">
    <property type="entry name" value="LexA_repressor"/>
</dbReference>
<dbReference type="InterPro" id="IPR006197">
    <property type="entry name" value="Peptidase_S24_LexA"/>
</dbReference>
<dbReference type="InterPro" id="IPR015927">
    <property type="entry name" value="Peptidase_S24_S26A/B/C"/>
</dbReference>
<dbReference type="InterPro" id="IPR036388">
    <property type="entry name" value="WH-like_DNA-bd_sf"/>
</dbReference>
<dbReference type="InterPro" id="IPR036390">
    <property type="entry name" value="WH_DNA-bd_sf"/>
</dbReference>
<dbReference type="NCBIfam" id="TIGR00498">
    <property type="entry name" value="lexA"/>
    <property type="match status" value="1"/>
</dbReference>
<dbReference type="PANTHER" id="PTHR33516">
    <property type="entry name" value="LEXA REPRESSOR"/>
    <property type="match status" value="1"/>
</dbReference>
<dbReference type="PANTHER" id="PTHR33516:SF2">
    <property type="entry name" value="LEXA REPRESSOR-RELATED"/>
    <property type="match status" value="1"/>
</dbReference>
<dbReference type="Pfam" id="PF01726">
    <property type="entry name" value="LexA_DNA_bind"/>
    <property type="match status" value="1"/>
</dbReference>
<dbReference type="Pfam" id="PF00717">
    <property type="entry name" value="Peptidase_S24"/>
    <property type="match status" value="1"/>
</dbReference>
<dbReference type="PRINTS" id="PR00726">
    <property type="entry name" value="LEXASERPTASE"/>
</dbReference>
<dbReference type="SUPFAM" id="SSF51306">
    <property type="entry name" value="LexA/Signal peptidase"/>
    <property type="match status" value="1"/>
</dbReference>
<dbReference type="SUPFAM" id="SSF46785">
    <property type="entry name" value="Winged helix' DNA-binding domain"/>
    <property type="match status" value="1"/>
</dbReference>
<sequence>MDLTDTQQAILALIAERIETDGVPPSQTEIARAFGFKGVRAAQYHLEALEQAGAIRRVPGQARGIRLAGAAAHARAAPAEEPVRDDVLRLPVLGRVAAGLPIGADIGSDDFVVLDRVFFSPSPDYLLKVQGDSMRDEGIFNGDLIGVHRTRDARSGQIVVARIDEEITVKLLKIGKDRIRLLPRNPDYAPIEVLPDQDFAIEGLYCGLLRPNR</sequence>